<dbReference type="EC" id="2.4.1.180" evidence="1"/>
<dbReference type="EMBL" id="CP000647">
    <property type="protein sequence ID" value="ABR79667.1"/>
    <property type="molecule type" value="Genomic_DNA"/>
</dbReference>
<dbReference type="SMR" id="A6TGI3"/>
<dbReference type="STRING" id="272620.KPN_04295"/>
<dbReference type="CAZy" id="GT26">
    <property type="family name" value="Glycosyltransferase Family 26"/>
</dbReference>
<dbReference type="PaxDb" id="272620-KPN_04295"/>
<dbReference type="EnsemblBacteria" id="ABR79667">
    <property type="protein sequence ID" value="ABR79667"/>
    <property type="gene ID" value="KPN_04295"/>
</dbReference>
<dbReference type="KEGG" id="kpn:KPN_04295"/>
<dbReference type="HOGENOM" id="CLU_063203_3_2_6"/>
<dbReference type="UniPathway" id="UPA00566"/>
<dbReference type="Proteomes" id="UP000000265">
    <property type="component" value="Chromosome"/>
</dbReference>
<dbReference type="GO" id="GO:0047241">
    <property type="term" value="F:lipopolysaccharide N-acetylmannosaminouronosyltransferase activity"/>
    <property type="evidence" value="ECO:0007669"/>
    <property type="project" value="UniProtKB-UniRule"/>
</dbReference>
<dbReference type="GO" id="GO:0009246">
    <property type="term" value="P:enterobacterial common antigen biosynthetic process"/>
    <property type="evidence" value="ECO:0007669"/>
    <property type="project" value="UniProtKB-UniRule"/>
</dbReference>
<dbReference type="CDD" id="cd06533">
    <property type="entry name" value="Glyco_transf_WecG_TagA"/>
    <property type="match status" value="1"/>
</dbReference>
<dbReference type="HAMAP" id="MF_01001">
    <property type="entry name" value="WecG_RffM"/>
    <property type="match status" value="1"/>
</dbReference>
<dbReference type="InterPro" id="IPR023085">
    <property type="entry name" value="UDP-ManNAcA_Trfase_WecG"/>
</dbReference>
<dbReference type="InterPro" id="IPR004629">
    <property type="entry name" value="WecG_TagA_CpsF"/>
</dbReference>
<dbReference type="NCBIfam" id="NF002980">
    <property type="entry name" value="PRK03692.1"/>
    <property type="match status" value="1"/>
</dbReference>
<dbReference type="NCBIfam" id="TIGR00696">
    <property type="entry name" value="wecG_tagA_cpsF"/>
    <property type="match status" value="1"/>
</dbReference>
<dbReference type="PANTHER" id="PTHR34136">
    <property type="match status" value="1"/>
</dbReference>
<dbReference type="PANTHER" id="PTHR34136:SF1">
    <property type="entry name" value="UDP-N-ACETYL-D-MANNOSAMINURONIC ACID TRANSFERASE"/>
    <property type="match status" value="1"/>
</dbReference>
<dbReference type="Pfam" id="PF03808">
    <property type="entry name" value="Glyco_tran_WecG"/>
    <property type="match status" value="1"/>
</dbReference>
<accession>A6TGI3</accession>
<feature type="chain" id="PRO_0000318860" description="UDP-N-acetyl-D-mannosaminuronic acid transferase">
    <location>
        <begin position="1"/>
        <end position="248"/>
    </location>
</feature>
<evidence type="ECO:0000255" key="1">
    <source>
        <dbReference type="HAMAP-Rule" id="MF_01001"/>
    </source>
</evidence>
<proteinExistence type="inferred from homology"/>
<gene>
    <name evidence="1" type="primary">wecG</name>
    <name evidence="1" type="synonym">rffM</name>
    <name type="ordered locus">KPN78578_42430</name>
    <name type="ORF">KPN_04295</name>
</gene>
<sequence>MDMTGTISAPLYLLRGLQLIGWRDMPHALDYLFADGALREGTLVAINAEKMLAVEDNPEVRALIEAAEFKYADGISVVRSLRKKYPQAQVSRVAGADLWEALMQRAGAEGTPVFLVGGKPEVLAQTESRLRQRWQVNIVGSQDGYFTPEQRQALFERIRDSGAKIVTVAMGSPRQEIFMRDCRRLYPHALYMGVGGTYDVFTGHVHRAPKFWQDLGLEWFYRLLLQPSRIKRQFRLLRYLRWHYSGKL</sequence>
<name>WECG_KLEP7</name>
<protein>
    <recommendedName>
        <fullName evidence="1">UDP-N-acetyl-D-mannosaminuronic acid transferase</fullName>
        <shortName evidence="1">UDP-ManNAcA transferase</shortName>
        <ecNumber evidence="1">2.4.1.180</ecNumber>
    </recommendedName>
</protein>
<comment type="function">
    <text evidence="1">Catalyzes the synthesis of Und-PP-GlcNAc-ManNAcA (Lipid II), the second lipid-linked intermediate involved in enterobacterial common antigen (ECA) synthesis.</text>
</comment>
<comment type="catalytic activity">
    <reaction evidence="1">
        <text>UDP-N-acetyl-alpha-D-mannosaminouronate + N-acetyl-alpha-D-glucosaminyl-di-trans,octa-cis-undecaprenyl diphosphate = beta-D-ManNAcA-(1-&gt;4)-alpha-D-GlcNAc-di-trans,octa-cis-undecaprenyl diphosphate + UDP + H(+)</text>
        <dbReference type="Rhea" id="RHEA:28366"/>
        <dbReference type="ChEBI" id="CHEBI:15378"/>
        <dbReference type="ChEBI" id="CHEBI:58223"/>
        <dbReference type="ChEBI" id="CHEBI:61495"/>
        <dbReference type="ChEBI" id="CHEBI:62959"/>
        <dbReference type="ChEBI" id="CHEBI:70731"/>
        <dbReference type="EC" id="2.4.1.180"/>
    </reaction>
</comment>
<comment type="pathway">
    <text evidence="1">Bacterial outer membrane biogenesis; enterobacterial common antigen biosynthesis.</text>
</comment>
<comment type="similarity">
    <text evidence="1">Belongs to the glycosyltransferase 26 family.</text>
</comment>
<reference key="1">
    <citation type="submission" date="2006-09" db="EMBL/GenBank/DDBJ databases">
        <authorList>
            <consortium name="The Klebsiella pneumonia Genome Sequencing Project"/>
            <person name="McClelland M."/>
            <person name="Sanderson E.K."/>
            <person name="Spieth J."/>
            <person name="Clifton W.S."/>
            <person name="Latreille P."/>
            <person name="Sabo A."/>
            <person name="Pepin K."/>
            <person name="Bhonagiri V."/>
            <person name="Porwollik S."/>
            <person name="Ali J."/>
            <person name="Wilson R.K."/>
        </authorList>
    </citation>
    <scope>NUCLEOTIDE SEQUENCE [LARGE SCALE GENOMIC DNA]</scope>
    <source>
        <strain>ATCC 700721 / MGH 78578</strain>
    </source>
</reference>
<keyword id="KW-0328">Glycosyltransferase</keyword>
<keyword id="KW-0808">Transferase</keyword>
<organism>
    <name type="scientific">Klebsiella pneumoniae subsp. pneumoniae (strain ATCC 700721 / MGH 78578)</name>
    <dbReference type="NCBI Taxonomy" id="272620"/>
    <lineage>
        <taxon>Bacteria</taxon>
        <taxon>Pseudomonadati</taxon>
        <taxon>Pseudomonadota</taxon>
        <taxon>Gammaproteobacteria</taxon>
        <taxon>Enterobacterales</taxon>
        <taxon>Enterobacteriaceae</taxon>
        <taxon>Klebsiella/Raoultella group</taxon>
        <taxon>Klebsiella</taxon>
        <taxon>Klebsiella pneumoniae complex</taxon>
    </lineage>
</organism>